<accession>Q800S2</accession>
<feature type="signal peptide" evidence="2">
    <location>
        <begin position="1"/>
        <end position="22"/>
    </location>
</feature>
<feature type="propeptide" id="PRO_0000449899" evidence="7 8">
    <location>
        <begin position="23"/>
        <end position="45"/>
    </location>
</feature>
<feature type="peptide" id="PRO_5004297327" description="Plasticin-C1" evidence="6">
    <location>
        <begin position="46"/>
        <end position="68"/>
    </location>
</feature>
<feature type="propeptide" id="PRO_0000449900" evidence="6">
    <location>
        <begin position="70"/>
        <end position="71"/>
    </location>
</feature>
<feature type="region of interest" description="Disordered" evidence="3">
    <location>
        <begin position="25"/>
        <end position="46"/>
    </location>
</feature>
<feature type="compositionally biased region" description="Acidic residues" evidence="3">
    <location>
        <begin position="30"/>
        <end position="40"/>
    </location>
</feature>
<feature type="modified residue" description="Asparagine amide" evidence="6">
    <location>
        <position position="68"/>
    </location>
</feature>
<sequence length="71" mass="7710">MAFLKKSLLLVLFLGLVSLSICEEEKRENEDEEKQEDDDQSENKRGLLSGILNTAGGLLGNLIGSLSNGES</sequence>
<name>PTC1_AGACL</name>
<keyword id="KW-0027">Amidation</keyword>
<keyword id="KW-0878">Amphibian defense peptide</keyword>
<keyword id="KW-0165">Cleavage on pair of basic residues</keyword>
<keyword id="KW-0204">Cytolysis</keyword>
<keyword id="KW-0354">Hemolysis</keyword>
<keyword id="KW-0472">Membrane</keyword>
<keyword id="KW-0964">Secreted</keyword>
<keyword id="KW-0732">Signal</keyword>
<keyword id="KW-1052">Target cell membrane</keyword>
<keyword id="KW-1053">Target membrane</keyword>
<evidence type="ECO:0000250" key="1">
    <source>
        <dbReference type="UniProtKB" id="O93454"/>
    </source>
</evidence>
<evidence type="ECO:0000255" key="2"/>
<evidence type="ECO:0000256" key="3">
    <source>
        <dbReference type="SAM" id="MobiDB-lite"/>
    </source>
</evidence>
<evidence type="ECO:0000303" key="4">
    <source>
    </source>
</evidence>
<evidence type="ECO:0000303" key="5">
    <source>
    </source>
</evidence>
<evidence type="ECO:0000305" key="6"/>
<evidence type="ECO:0000305" key="7">
    <source>
    </source>
</evidence>
<evidence type="ECO:0000305" key="8">
    <source>
    </source>
</evidence>
<proteinExistence type="inferred from homology"/>
<protein>
    <recommendedName>
        <fullName evidence="5">Plasticin-C1</fullName>
    </recommendedName>
    <alternativeName>
        <fullName evidence="4">DRP-AC1</fullName>
    </alternativeName>
</protein>
<reference key="1">
    <citation type="journal article" date="2003" name="Eur. J. Biochem.">
        <title>Antimicrobial peptides from hylid and ranin frogs originated from a 150-million-year-old ancestral precursor with a conserved signal peptide but a hypermutable antimicrobial domain.</title>
        <authorList>
            <person name="Vanhoye D."/>
            <person name="Bruston F."/>
            <person name="Nicolas P."/>
            <person name="Amiche M."/>
        </authorList>
    </citation>
    <scope>NUCLEOTIDE SEQUENCE [MRNA]</scope>
    <source>
        <tissue>Skin</tissue>
    </source>
</reference>
<reference key="2">
    <citation type="journal article" date="2008" name="Peptides">
        <title>A consistent nomenclature of antimicrobial peptides isolated from frogs of the subfamily Phyllomedusinae.</title>
        <authorList>
            <person name="Amiche M."/>
            <person name="Ladram A."/>
            <person name="Nicolas P."/>
        </authorList>
    </citation>
    <scope>NOMENCLATURE</scope>
</reference>
<organism>
    <name type="scientific">Agalychnis callidryas</name>
    <name type="common">Red-eyed tree frog</name>
    <name type="synonym">Phyllomedusa callidryas</name>
    <dbReference type="NCBI Taxonomy" id="197464"/>
    <lineage>
        <taxon>Eukaryota</taxon>
        <taxon>Metazoa</taxon>
        <taxon>Chordata</taxon>
        <taxon>Craniata</taxon>
        <taxon>Vertebrata</taxon>
        <taxon>Euteleostomi</taxon>
        <taxon>Amphibia</taxon>
        <taxon>Batrachia</taxon>
        <taxon>Anura</taxon>
        <taxon>Neobatrachia</taxon>
        <taxon>Hyloidea</taxon>
        <taxon>Hylidae</taxon>
        <taxon>Phyllomedusinae</taxon>
        <taxon>Agalychnis</taxon>
    </lineage>
</organism>
<comment type="function">
    <text evidence="1">Neutral peptide with no antimicrobial activity. May act in synergy with cationic peptides by enhancing their activity. Has a moderate hemolytic activity.</text>
</comment>
<comment type="subcellular location">
    <subcellularLocation>
        <location evidence="7">Secreted</location>
    </subcellularLocation>
    <subcellularLocation>
        <location evidence="6">Target cell membrane</location>
    </subcellularLocation>
</comment>
<comment type="tissue specificity">
    <text evidence="7">Expressed by the skin glands.</text>
</comment>
<comment type="domain">
    <text evidence="6">Plasticins have huge conformational plasticity. They can display random coil, alpha-helical, beta-sheet or beta-harpin structures.</text>
</comment>
<comment type="similarity">
    <text evidence="6">Belongs to the frog skin active peptide (FSAP) family. Plasticin subfamily.</text>
</comment>
<comment type="online information" name="The antimicrobial peptide database">
    <link uri="https://wangapd3.com/database/query_output.php?ID=01387"/>
</comment>
<dbReference type="EMBL" id="AY218775">
    <property type="protein sequence ID" value="AAO62950.1"/>
    <property type="molecule type" value="mRNA"/>
</dbReference>
<dbReference type="GO" id="GO:0005576">
    <property type="term" value="C:extracellular region"/>
    <property type="evidence" value="ECO:0007669"/>
    <property type="project" value="UniProtKB-SubCell"/>
</dbReference>
<dbReference type="GO" id="GO:0016020">
    <property type="term" value="C:membrane"/>
    <property type="evidence" value="ECO:0007669"/>
    <property type="project" value="UniProtKB-KW"/>
</dbReference>
<dbReference type="GO" id="GO:0044218">
    <property type="term" value="C:other organism cell membrane"/>
    <property type="evidence" value="ECO:0007669"/>
    <property type="project" value="UniProtKB-KW"/>
</dbReference>
<dbReference type="GO" id="GO:0006952">
    <property type="term" value="P:defense response"/>
    <property type="evidence" value="ECO:0007669"/>
    <property type="project" value="UniProtKB-KW"/>
</dbReference>
<dbReference type="GO" id="GO:0031640">
    <property type="term" value="P:killing of cells of another organism"/>
    <property type="evidence" value="ECO:0007669"/>
    <property type="project" value="UniProtKB-KW"/>
</dbReference>
<dbReference type="InterPro" id="IPR004275">
    <property type="entry name" value="Frog_antimicrobial_propeptide"/>
</dbReference>
<dbReference type="InterPro" id="IPR016322">
    <property type="entry name" value="FSAP"/>
</dbReference>
<dbReference type="Pfam" id="PF03032">
    <property type="entry name" value="FSAP_sig_propep"/>
    <property type="match status" value="1"/>
</dbReference>
<dbReference type="PIRSF" id="PIRSF001822">
    <property type="entry name" value="Dermaseptin_precursor"/>
    <property type="match status" value="1"/>
</dbReference>